<evidence type="ECO:0000255" key="1">
    <source>
        <dbReference type="PROSITE-ProRule" id="PRU00353"/>
    </source>
</evidence>
<evidence type="ECO:0000256" key="2">
    <source>
        <dbReference type="SAM" id="MobiDB-lite"/>
    </source>
</evidence>
<evidence type="ECO:0000269" key="3">
    <source>
    </source>
</evidence>
<evidence type="ECO:0000269" key="4">
    <source>
    </source>
</evidence>
<evidence type="ECO:0000269" key="5">
    <source>
    </source>
</evidence>
<evidence type="ECO:0000303" key="6">
    <source>
    </source>
</evidence>
<evidence type="ECO:0000305" key="7"/>
<feature type="chain" id="PRO_0000447552" description="NAC domain-containing protein JA2L">
    <location>
        <begin position="1"/>
        <end position="356"/>
    </location>
</feature>
<feature type="domain" description="NAC" evidence="1">
    <location>
        <begin position="14"/>
        <end position="162"/>
    </location>
</feature>
<feature type="DNA-binding region" evidence="1">
    <location>
        <begin position="111"/>
        <end position="168"/>
    </location>
</feature>
<feature type="region of interest" description="Disordered" evidence="2">
    <location>
        <begin position="163"/>
        <end position="191"/>
    </location>
</feature>
<feature type="compositionally biased region" description="Polar residues" evidence="2">
    <location>
        <begin position="164"/>
        <end position="174"/>
    </location>
</feature>
<proteinExistence type="evidence at transcript level"/>
<keyword id="KW-0238">DNA-binding</keyword>
<keyword id="KW-0539">Nucleus</keyword>
<keyword id="KW-0611">Plant defense</keyword>
<keyword id="KW-1185">Reference proteome</keyword>
<keyword id="KW-0804">Transcription</keyword>
<keyword id="KW-0805">Transcription regulation</keyword>
<sequence>MGVQEMDPLTQLSLPPGFRFYPTDEELLVQYLCRKVAGHDFSLQIIAEIDLYKFDPWVLPSKAIFGEKEWYFFSPRDRKYPNGSRPNRVAGSGYWKATGTDKVITTDGRKVGIKKALVFYIGKAPKGTKTNWIMHEYRLSEPTTKTGSSRLDDWVLCRIYKKNSGGQKSSCSDLQNKDISHASSSSSSSQFDDMLESLPAIEDRYFSLPRVNSIRNFQQNDKINLQQLSSGNFDWAAMAGLNSFPELRTGNQVPTPGNQTPVLINTNQYHNHNDNLNNFNEFFANSTALNFHGEVKFEGGVDQEVESSVRAQRLNSVNPGFFQENSTGFSSSYTNSVPDPFGIRYPTQTVNMGFTG</sequence>
<accession>A0A3Q7HH64</accession>
<comment type="function">
    <text evidence="3 4">Transcription factor that acts downstream of MYC2 in the jasmonate-mediated response to Botrytis cinerea infection (PubMed:28733419). With MYC2 forms a transcription module that regulates wounding-responsive genes (PubMed:28733419). Involved in jasmonate- and coronatine-mediated stomatal reopening in response to Pseudomonas syringae pv tomato DC3000 infection (PubMed:25005917). Regulates the expression of threonine deaminase 2 (TD2) through promoter binding (PubMed:28733419).</text>
</comment>
<comment type="subcellular location">
    <subcellularLocation>
        <location evidence="1 3">Nucleus</location>
    </subcellularLocation>
</comment>
<comment type="tissue specificity">
    <text evidence="3">Expressed in guard cells of the epidermis.</text>
</comment>
<comment type="induction">
    <text evidence="3 4 5">Induced by jasmonate (JA) (PubMed:25005917, PubMed:28733419, PubMed:30610166). Induced by wounding (PubMed:25005917, PubMed:28733419). Induced by infection with the fungal pathogen Botrytis cinerea (PubMed:28733419). Induced by coronatine (PubMed:25005917).</text>
</comment>
<comment type="domain">
    <text evidence="1">The NAC domain includes a DNA binding domain and a dimerization domain.</text>
</comment>
<comment type="miscellaneous">
    <text evidence="4">Plants silencing JA2L exhibit enhanced susceptibility to the fungal pathogen Botrytis cinerea.</text>
</comment>
<protein>
    <recommendedName>
        <fullName evidence="7">NAC domain-containing protein JA2L</fullName>
    </recommendedName>
    <alternativeName>
        <fullName evidence="6">Protein JASMONIC ACID 2-LIKE</fullName>
        <shortName evidence="6">Protein JA2-LIKE</shortName>
    </alternativeName>
</protein>
<gene>
    <name evidence="6" type="primary">JA2L</name>
    <name evidence="7" type="ordered locus">Solyc07g063410</name>
</gene>
<reference key="1">
    <citation type="journal article" date="2012" name="Nature">
        <title>The tomato genome sequence provides insights into fleshy fruit evolution.</title>
        <authorList>
            <consortium name="Tomato Genome Consortium"/>
        </authorList>
    </citation>
    <scope>NUCLEOTIDE SEQUENCE [LARGE SCALE GENOMIC DNA]</scope>
    <source>
        <strain>cv. Heinz 1706</strain>
    </source>
</reference>
<reference key="2">
    <citation type="journal article" date="2014" name="Plant Cell">
        <title>Closely related NAC transcription factors of tomato differentially regulate stomatal closure and reopening during pathogen attack.</title>
        <authorList>
            <person name="Du M."/>
            <person name="Zhai Q."/>
            <person name="Deng L."/>
            <person name="Li S."/>
            <person name="Li H."/>
            <person name="Yan L."/>
            <person name="Huang Z."/>
            <person name="Wang B."/>
            <person name="Jiang H."/>
            <person name="Huang T."/>
            <person name="Li C.B."/>
            <person name="Wei J."/>
            <person name="Kang L."/>
            <person name="Li J."/>
            <person name="Li C."/>
        </authorList>
    </citation>
    <scope>FUNCTION</scope>
    <scope>SUBCELLULAR LOCATION</scope>
    <scope>TISSUE SPECIFICITY</scope>
    <scope>INDUCTION</scope>
</reference>
<reference key="3">
    <citation type="journal article" date="2017" name="Plant Cell">
        <title>MYC2 orchestrates a hierarchical transcriptional cascade that regulates jasmonate-mediated plant immunity in tomato.</title>
        <authorList>
            <person name="Du M."/>
            <person name="Zhao J."/>
            <person name="Tzeng D.T.W."/>
            <person name="Liu Y."/>
            <person name="Deng L."/>
            <person name="Yang T."/>
            <person name="Zhai Q."/>
            <person name="Wu F."/>
            <person name="Huang Z."/>
            <person name="Zhou M."/>
            <person name="Wang Q."/>
            <person name="Chen Q."/>
            <person name="Zhong S."/>
            <person name="Li C.B."/>
            <person name="Li C."/>
        </authorList>
    </citation>
    <scope>FUNCTION</scope>
    <scope>INDUCTION</scope>
</reference>
<reference key="4">
    <citation type="journal article" date="2019" name="Plant Cell">
        <title>MYC2 regulates the termination of jasmonate signaling via an autoregulatory negative feedback loop.</title>
        <authorList>
            <person name="Liu Y."/>
            <person name="Du M."/>
            <person name="Deng L."/>
            <person name="Shen J."/>
            <person name="Fang M."/>
            <person name="Chen Q."/>
            <person name="Lu Y."/>
            <person name="Wang Q."/>
            <person name="Li C."/>
            <person name="Zhai Q."/>
        </authorList>
    </citation>
    <scope>INDUCTION BY JASMONATE</scope>
</reference>
<name>JA2L_SOLLC</name>
<organism>
    <name type="scientific">Solanum lycopersicum</name>
    <name type="common">Tomato</name>
    <name type="synonym">Lycopersicon esculentum</name>
    <dbReference type="NCBI Taxonomy" id="4081"/>
    <lineage>
        <taxon>Eukaryota</taxon>
        <taxon>Viridiplantae</taxon>
        <taxon>Streptophyta</taxon>
        <taxon>Embryophyta</taxon>
        <taxon>Tracheophyta</taxon>
        <taxon>Spermatophyta</taxon>
        <taxon>Magnoliopsida</taxon>
        <taxon>eudicotyledons</taxon>
        <taxon>Gunneridae</taxon>
        <taxon>Pentapetalae</taxon>
        <taxon>asterids</taxon>
        <taxon>lamiids</taxon>
        <taxon>Solanales</taxon>
        <taxon>Solanaceae</taxon>
        <taxon>Solanoideae</taxon>
        <taxon>Solaneae</taxon>
        <taxon>Solanum</taxon>
        <taxon>Solanum subgen. Lycopersicon</taxon>
    </lineage>
</organism>
<dbReference type="EMBL" id="CM001070">
    <property type="status" value="NOT_ANNOTATED_CDS"/>
    <property type="molecule type" value="Genomic_DNA"/>
</dbReference>
<dbReference type="RefSeq" id="NP_001306107.1">
    <property type="nucleotide sequence ID" value="NM_001319178.1"/>
</dbReference>
<dbReference type="SMR" id="A0A3Q7HH64"/>
<dbReference type="FunCoup" id="A0A3Q7HH64">
    <property type="interactions" value="17"/>
</dbReference>
<dbReference type="STRING" id="4081.A0A3Q7HH64"/>
<dbReference type="PaxDb" id="4081-Solyc07g063410.2.1"/>
<dbReference type="EnsemblPlants" id="Solyc07g063410.3.1">
    <property type="protein sequence ID" value="Solyc07g063410.3.1"/>
    <property type="gene ID" value="Solyc07g063410.3"/>
</dbReference>
<dbReference type="GeneID" id="101248026"/>
<dbReference type="Gramene" id="Solyc07g063410.3.1">
    <property type="protein sequence ID" value="Solyc07g063410.3.1"/>
    <property type="gene ID" value="Solyc07g063410.3"/>
</dbReference>
<dbReference type="KEGG" id="sly:101248026"/>
<dbReference type="InParanoid" id="A0A3Q7HH64"/>
<dbReference type="OMA" id="IRYPTQP"/>
<dbReference type="OrthoDB" id="1921961at2759"/>
<dbReference type="Proteomes" id="UP000004994">
    <property type="component" value="Chromosome 7"/>
</dbReference>
<dbReference type="GO" id="GO:0005634">
    <property type="term" value="C:nucleus"/>
    <property type="evidence" value="ECO:0007669"/>
    <property type="project" value="UniProtKB-SubCell"/>
</dbReference>
<dbReference type="GO" id="GO:0003677">
    <property type="term" value="F:DNA binding"/>
    <property type="evidence" value="ECO:0007669"/>
    <property type="project" value="UniProtKB-KW"/>
</dbReference>
<dbReference type="GO" id="GO:0006952">
    <property type="term" value="P:defense response"/>
    <property type="evidence" value="ECO:0007669"/>
    <property type="project" value="UniProtKB-KW"/>
</dbReference>
<dbReference type="GO" id="GO:0006355">
    <property type="term" value="P:regulation of DNA-templated transcription"/>
    <property type="evidence" value="ECO:0007669"/>
    <property type="project" value="InterPro"/>
</dbReference>
<dbReference type="FunFam" id="2.170.150.80:FF:000008">
    <property type="entry name" value="NAC domain-containing protein 72-like"/>
    <property type="match status" value="1"/>
</dbReference>
<dbReference type="Gene3D" id="2.170.150.80">
    <property type="entry name" value="NAC domain"/>
    <property type="match status" value="1"/>
</dbReference>
<dbReference type="InterPro" id="IPR003441">
    <property type="entry name" value="NAC-dom"/>
</dbReference>
<dbReference type="InterPro" id="IPR036093">
    <property type="entry name" value="NAC_dom_sf"/>
</dbReference>
<dbReference type="PANTHER" id="PTHR31744:SF233">
    <property type="entry name" value="NAC DOMAIN-CONTAINING PROTEIN 72-LIKE"/>
    <property type="match status" value="1"/>
</dbReference>
<dbReference type="PANTHER" id="PTHR31744">
    <property type="entry name" value="PROTEIN CUP-SHAPED COTYLEDON 2-RELATED"/>
    <property type="match status" value="1"/>
</dbReference>
<dbReference type="Pfam" id="PF02365">
    <property type="entry name" value="NAM"/>
    <property type="match status" value="1"/>
</dbReference>
<dbReference type="SUPFAM" id="SSF101941">
    <property type="entry name" value="NAC domain"/>
    <property type="match status" value="1"/>
</dbReference>
<dbReference type="PROSITE" id="PS51005">
    <property type="entry name" value="NAC"/>
    <property type="match status" value="1"/>
</dbReference>